<accession>A5GQ30</accession>
<comment type="function">
    <text evidence="1">Part of the Sec protein translocase complex. Interacts with the SecYEG preprotein conducting channel. Has a central role in coupling the hydrolysis of ATP to the transfer of proteins into and across the cell membrane, serving as an ATP-driven molecular motor driving the stepwise translocation of polypeptide chains across the membrane.</text>
</comment>
<comment type="function">
    <text evidence="1">Probably participates in protein translocation into and across both the cytoplasmic and thylakoid membranes in cyanobacterial cells.</text>
</comment>
<comment type="catalytic activity">
    <reaction evidence="1">
        <text>ATP + H2O + cellular proteinSide 1 = ADP + phosphate + cellular proteinSide 2.</text>
        <dbReference type="EC" id="7.4.2.8"/>
    </reaction>
</comment>
<comment type="subunit">
    <text evidence="1">Monomer and homodimer. Part of the essential Sec protein translocation apparatus which comprises SecA, SecYEG and auxiliary proteins SecDF. Other proteins may also be involved.</text>
</comment>
<comment type="subcellular location">
    <subcellularLocation>
        <location evidence="1">Cell inner membrane</location>
        <topology evidence="1">Peripheral membrane protein</topology>
        <orientation evidence="1">Cytoplasmic side</orientation>
    </subcellularLocation>
    <subcellularLocation>
        <location evidence="1">Cellular thylakoid membrane</location>
        <topology evidence="1">Peripheral membrane protein</topology>
        <orientation evidence="1">Cytoplasmic side</orientation>
    </subcellularLocation>
    <subcellularLocation>
        <location evidence="1">Cytoplasm</location>
    </subcellularLocation>
</comment>
<comment type="similarity">
    <text evidence="1">Belongs to the SecA family.</text>
</comment>
<comment type="sequence caution" evidence="2">
    <conflict type="erroneous initiation">
        <sequence resource="EMBL-CDS" id="CAK26989"/>
    </conflict>
    <text>Extended N-terminus.</text>
</comment>
<dbReference type="EC" id="7.4.2.8" evidence="1"/>
<dbReference type="EMBL" id="CT978603">
    <property type="protein sequence ID" value="CAK26989.1"/>
    <property type="status" value="ALT_INIT"/>
    <property type="molecule type" value="Genomic_DNA"/>
</dbReference>
<dbReference type="SMR" id="A5GQ30"/>
<dbReference type="STRING" id="316278.SynRCC307_0086"/>
<dbReference type="KEGG" id="syr:SynRCC307_0086"/>
<dbReference type="eggNOG" id="COG0653">
    <property type="taxonomic scope" value="Bacteria"/>
</dbReference>
<dbReference type="HOGENOM" id="CLU_005314_3_0_3"/>
<dbReference type="OrthoDB" id="9805579at2"/>
<dbReference type="Proteomes" id="UP000001115">
    <property type="component" value="Chromosome"/>
</dbReference>
<dbReference type="GO" id="GO:0031522">
    <property type="term" value="C:cell envelope Sec protein transport complex"/>
    <property type="evidence" value="ECO:0007669"/>
    <property type="project" value="TreeGrafter"/>
</dbReference>
<dbReference type="GO" id="GO:0005829">
    <property type="term" value="C:cytosol"/>
    <property type="evidence" value="ECO:0007669"/>
    <property type="project" value="TreeGrafter"/>
</dbReference>
<dbReference type="GO" id="GO:0031676">
    <property type="term" value="C:plasma membrane-derived thylakoid membrane"/>
    <property type="evidence" value="ECO:0007669"/>
    <property type="project" value="UniProtKB-SubCell"/>
</dbReference>
<dbReference type="GO" id="GO:0005524">
    <property type="term" value="F:ATP binding"/>
    <property type="evidence" value="ECO:0007669"/>
    <property type="project" value="UniProtKB-UniRule"/>
</dbReference>
<dbReference type="GO" id="GO:0008564">
    <property type="term" value="F:protein-exporting ATPase activity"/>
    <property type="evidence" value="ECO:0007669"/>
    <property type="project" value="UniProtKB-EC"/>
</dbReference>
<dbReference type="GO" id="GO:0065002">
    <property type="term" value="P:intracellular protein transmembrane transport"/>
    <property type="evidence" value="ECO:0007669"/>
    <property type="project" value="UniProtKB-UniRule"/>
</dbReference>
<dbReference type="GO" id="GO:0017038">
    <property type="term" value="P:protein import"/>
    <property type="evidence" value="ECO:0007669"/>
    <property type="project" value="InterPro"/>
</dbReference>
<dbReference type="GO" id="GO:0006605">
    <property type="term" value="P:protein targeting"/>
    <property type="evidence" value="ECO:0007669"/>
    <property type="project" value="UniProtKB-UniRule"/>
</dbReference>
<dbReference type="GO" id="GO:0043952">
    <property type="term" value="P:protein transport by the Sec complex"/>
    <property type="evidence" value="ECO:0007669"/>
    <property type="project" value="TreeGrafter"/>
</dbReference>
<dbReference type="CDD" id="cd17928">
    <property type="entry name" value="DEXDc_SecA"/>
    <property type="match status" value="1"/>
</dbReference>
<dbReference type="CDD" id="cd18803">
    <property type="entry name" value="SF2_C_secA"/>
    <property type="match status" value="1"/>
</dbReference>
<dbReference type="FunFam" id="3.90.1440.10:FF:000003">
    <property type="entry name" value="Preprotein translocase SecA subunit"/>
    <property type="match status" value="1"/>
</dbReference>
<dbReference type="FunFam" id="3.40.50.300:FF:000429">
    <property type="entry name" value="Preprotein translocase subunit SecA"/>
    <property type="match status" value="1"/>
</dbReference>
<dbReference type="FunFam" id="1.10.3060.10:FF:000003">
    <property type="entry name" value="Protein translocase subunit SecA"/>
    <property type="match status" value="1"/>
</dbReference>
<dbReference type="FunFam" id="3.40.50.300:FF:000334">
    <property type="entry name" value="Protein translocase subunit SecA"/>
    <property type="match status" value="1"/>
</dbReference>
<dbReference type="Gene3D" id="1.10.3060.10">
    <property type="entry name" value="Helical scaffold and wing domains of SecA"/>
    <property type="match status" value="1"/>
</dbReference>
<dbReference type="Gene3D" id="3.40.50.300">
    <property type="entry name" value="P-loop containing nucleotide triphosphate hydrolases"/>
    <property type="match status" value="2"/>
</dbReference>
<dbReference type="Gene3D" id="3.90.1440.10">
    <property type="entry name" value="SecA, preprotein cross-linking domain"/>
    <property type="match status" value="1"/>
</dbReference>
<dbReference type="HAMAP" id="MF_01382">
    <property type="entry name" value="SecA"/>
    <property type="match status" value="1"/>
</dbReference>
<dbReference type="InterPro" id="IPR014001">
    <property type="entry name" value="Helicase_ATP-bd"/>
</dbReference>
<dbReference type="InterPro" id="IPR027417">
    <property type="entry name" value="P-loop_NTPase"/>
</dbReference>
<dbReference type="InterPro" id="IPR000185">
    <property type="entry name" value="SecA"/>
</dbReference>
<dbReference type="InterPro" id="IPR020937">
    <property type="entry name" value="SecA_CS"/>
</dbReference>
<dbReference type="InterPro" id="IPR011115">
    <property type="entry name" value="SecA_DEAD"/>
</dbReference>
<dbReference type="InterPro" id="IPR014018">
    <property type="entry name" value="SecA_motor_DEAD"/>
</dbReference>
<dbReference type="InterPro" id="IPR011130">
    <property type="entry name" value="SecA_preprotein_X-link_dom"/>
</dbReference>
<dbReference type="InterPro" id="IPR044722">
    <property type="entry name" value="SecA_SF2_C"/>
</dbReference>
<dbReference type="InterPro" id="IPR011116">
    <property type="entry name" value="SecA_Wing/Scaffold"/>
</dbReference>
<dbReference type="InterPro" id="IPR036266">
    <property type="entry name" value="SecA_Wing/Scaffold_sf"/>
</dbReference>
<dbReference type="InterPro" id="IPR036670">
    <property type="entry name" value="SecA_X-link_sf"/>
</dbReference>
<dbReference type="NCBIfam" id="TIGR00963">
    <property type="entry name" value="secA"/>
    <property type="match status" value="1"/>
</dbReference>
<dbReference type="PANTHER" id="PTHR30612:SF0">
    <property type="entry name" value="CHLOROPLAST PROTEIN-TRANSPORTING ATPASE"/>
    <property type="match status" value="1"/>
</dbReference>
<dbReference type="PANTHER" id="PTHR30612">
    <property type="entry name" value="SECA INNER MEMBRANE COMPONENT OF SEC PROTEIN SECRETION SYSTEM"/>
    <property type="match status" value="1"/>
</dbReference>
<dbReference type="Pfam" id="PF21090">
    <property type="entry name" value="P-loop_SecA"/>
    <property type="match status" value="1"/>
</dbReference>
<dbReference type="Pfam" id="PF07517">
    <property type="entry name" value="SecA_DEAD"/>
    <property type="match status" value="1"/>
</dbReference>
<dbReference type="Pfam" id="PF01043">
    <property type="entry name" value="SecA_PP_bind"/>
    <property type="match status" value="1"/>
</dbReference>
<dbReference type="Pfam" id="PF07516">
    <property type="entry name" value="SecA_SW"/>
    <property type="match status" value="1"/>
</dbReference>
<dbReference type="PRINTS" id="PR00906">
    <property type="entry name" value="SECA"/>
</dbReference>
<dbReference type="SMART" id="SM00957">
    <property type="entry name" value="SecA_DEAD"/>
    <property type="match status" value="1"/>
</dbReference>
<dbReference type="SMART" id="SM00958">
    <property type="entry name" value="SecA_PP_bind"/>
    <property type="match status" value="1"/>
</dbReference>
<dbReference type="SUPFAM" id="SSF81886">
    <property type="entry name" value="Helical scaffold and wing domains of SecA"/>
    <property type="match status" value="1"/>
</dbReference>
<dbReference type="SUPFAM" id="SSF52540">
    <property type="entry name" value="P-loop containing nucleoside triphosphate hydrolases"/>
    <property type="match status" value="2"/>
</dbReference>
<dbReference type="SUPFAM" id="SSF81767">
    <property type="entry name" value="Pre-protein crosslinking domain of SecA"/>
    <property type="match status" value="1"/>
</dbReference>
<dbReference type="PROSITE" id="PS01312">
    <property type="entry name" value="SECA"/>
    <property type="match status" value="1"/>
</dbReference>
<dbReference type="PROSITE" id="PS51196">
    <property type="entry name" value="SECA_MOTOR_DEAD"/>
    <property type="match status" value="1"/>
</dbReference>
<evidence type="ECO:0000255" key="1">
    <source>
        <dbReference type="HAMAP-Rule" id="MF_01382"/>
    </source>
</evidence>
<evidence type="ECO:0000305" key="2"/>
<name>SECA_SYNR3</name>
<gene>
    <name evidence="1" type="primary">secA</name>
    <name type="ordered locus">SynRCC307_0086</name>
</gene>
<reference key="1">
    <citation type="submission" date="2006-05" db="EMBL/GenBank/DDBJ databases">
        <authorList>
            <consortium name="Genoscope"/>
        </authorList>
    </citation>
    <scope>NUCLEOTIDE SEQUENCE [LARGE SCALE GENOMIC DNA]</scope>
    <source>
        <strain>RCC307</strain>
    </source>
</reference>
<sequence>MLKLLLGDPNARKLKRYQPLVSDINLLEEDIAPLSDEDLRRRTSEFRQQLENAGSLERQRPVLDQLLPEAFAIVREAGKRVLGMRHFDVQLLGGMVLHDGQIAEMKTGEGKTLVATLPSYLNALTGRGVHVVTVNDYLARRDAEWMGQVHRFLGLSVGLIQQDMSPAERRQNYGCDVTYATNSELGFDYLRDNMATDISEVVQREFQYCVIDEVDSILVDEARTPLIISGQVERPQEKYNQAAALALQLDRAAEMSKDGIDPEGDYEVDEKQRSVILTDEGYAKAESILGVEDLFNAADPWAHYVTNALKAKELFIKDVNYITRDNEVVIVDEFTGRVMPGRRWSDGLHQAVEAKESMPIQPETQTLASITYQNFFLLYPRLAGMTGTAKTEEVEFEKTYKLEVTVVPTNRTRARRDLVDQVYKTETGKWRAVAQETAEVHRTGRPVLVGTTSVEKSEVLSALLQEEGIPHNLLNAKPENVEREAEIVAQAGRTGAVTIATNMAGRGTDIILGGNTDYMARLKVREALLPRLVRPEEGHRPPVPLQREASSGFAAAASAPAKPPSEARALGRLYPCELSPDTDAALADVARELVKLWGDRTLTVLELEDRISSAAEKAPSEDAGIMQLRQVLAQIRADYDAVISTEQASVRETGGLHVIGTERHESRRVDNQLRGRAGRQGDPGSTRFFLSLEDNLLRIFGGDRVAGLMNAFRVEEDMPIESGMLTRSLEGAQKKVETYYYDMRKQVFEYDEVMNNQRRAVYVERRRVLEGRDLKKQVLGYGERTMDDIVEAYVNPELPPEEWDLSHLTNKVKEFVYLLQDLEPQQLAGLSMEELKAFLHEQLRIAYDLKEAEIEQLKPGLMREAERFFILQQIDSLWREHLQSMDALRESVGLRGYGQKDPLIEYKNEGYDMFLEMMTQVRRNVIYSMFMFQPQPAPAQEDEAVV</sequence>
<feature type="chain" id="PRO_0000318473" description="Protein translocase subunit SecA">
    <location>
        <begin position="1"/>
        <end position="946"/>
    </location>
</feature>
<feature type="binding site" evidence="1">
    <location>
        <position position="90"/>
    </location>
    <ligand>
        <name>ATP</name>
        <dbReference type="ChEBI" id="CHEBI:30616"/>
    </ligand>
</feature>
<feature type="binding site" evidence="1">
    <location>
        <begin position="108"/>
        <end position="112"/>
    </location>
    <ligand>
        <name>ATP</name>
        <dbReference type="ChEBI" id="CHEBI:30616"/>
    </ligand>
</feature>
<feature type="binding site" evidence="1">
    <location>
        <position position="509"/>
    </location>
    <ligand>
        <name>ATP</name>
        <dbReference type="ChEBI" id="CHEBI:30616"/>
    </ligand>
</feature>
<proteinExistence type="inferred from homology"/>
<organism>
    <name type="scientific">Synechococcus sp. (strain RCC307)</name>
    <dbReference type="NCBI Taxonomy" id="316278"/>
    <lineage>
        <taxon>Bacteria</taxon>
        <taxon>Bacillati</taxon>
        <taxon>Cyanobacteriota</taxon>
        <taxon>Cyanophyceae</taxon>
        <taxon>Synechococcales</taxon>
        <taxon>Synechococcaceae</taxon>
        <taxon>Synechococcus</taxon>
    </lineage>
</organism>
<protein>
    <recommendedName>
        <fullName evidence="1">Protein translocase subunit SecA</fullName>
        <ecNumber evidence="1">7.4.2.8</ecNumber>
    </recommendedName>
</protein>
<keyword id="KW-0067">ATP-binding</keyword>
<keyword id="KW-0997">Cell inner membrane</keyword>
<keyword id="KW-1003">Cell membrane</keyword>
<keyword id="KW-0963">Cytoplasm</keyword>
<keyword id="KW-0472">Membrane</keyword>
<keyword id="KW-0547">Nucleotide-binding</keyword>
<keyword id="KW-0653">Protein transport</keyword>
<keyword id="KW-1185">Reference proteome</keyword>
<keyword id="KW-0793">Thylakoid</keyword>
<keyword id="KW-1278">Translocase</keyword>
<keyword id="KW-0811">Translocation</keyword>
<keyword id="KW-0813">Transport</keyword>